<proteinExistence type="evidence at protein level"/>
<keyword id="KW-0007">Acetylation</keyword>
<keyword id="KW-0101">Branched-chain amino acid catabolism</keyword>
<keyword id="KW-0903">Direct protein sequencing</keyword>
<keyword id="KW-0496">Mitochondrion</keyword>
<keyword id="KW-0520">NAD</keyword>
<keyword id="KW-0560">Oxidoreductase</keyword>
<keyword id="KW-1185">Reference proteome</keyword>
<keyword id="KW-0809">Transit peptide</keyword>
<evidence type="ECO:0000250" key="1"/>
<evidence type="ECO:0000250" key="2">
    <source>
        <dbReference type="UniProtKB" id="Q99L13"/>
    </source>
</evidence>
<evidence type="ECO:0000269" key="3">
    <source>
    </source>
</evidence>
<evidence type="ECO:0000305" key="4"/>
<accession>P29266</accession>
<accession>A1L107</accession>
<reference key="1">
    <citation type="journal article" date="1989" name="J. Biol. Chem.">
        <title>Cloning and sequence analysis of a cDNA for 3-hydroxyisobutyrate dehydrogenase. Evidence for its evolutionary relationship to other pyridine nucleotide-dependent dehydrogenases.</title>
        <authorList>
            <person name="Rougraff P.M."/>
            <person name="Zhang B."/>
            <person name="Kuntz M.J."/>
            <person name="Harris R.A."/>
            <person name="Crabb D.W."/>
        </authorList>
    </citation>
    <scope>NUCLEOTIDE SEQUENCE [MRNA]</scope>
    <source>
        <strain>Sprague-Dawley</strain>
        <tissue>Liver</tissue>
    </source>
</reference>
<reference key="2">
    <citation type="journal article" date="2004" name="Genome Res.">
        <title>The status, quality, and expansion of the NIH full-length cDNA project: the Mammalian Gene Collection (MGC).</title>
        <authorList>
            <consortium name="The MGC Project Team"/>
        </authorList>
    </citation>
    <scope>NUCLEOTIDE SEQUENCE [LARGE SCALE MRNA]</scope>
    <source>
        <tissue>Ovary</tissue>
    </source>
</reference>
<reference key="3">
    <citation type="submission" date="2006-11" db="UniProtKB">
        <authorList>
            <person name="Lubec G."/>
            <person name="Afjehi-Sadat L."/>
        </authorList>
    </citation>
    <scope>PROTEIN SEQUENCE OF 60-75; 297-310 AND 321-330</scope>
    <scope>IDENTIFICATION BY MASS SPECTROMETRY</scope>
    <source>
        <strain>Sprague-Dawley</strain>
        <tissue>Spinal cord</tissue>
    </source>
</reference>
<reference key="4">
    <citation type="journal article" date="1996" name="FEBS Lett.">
        <title>Structural and mechanistic similarities of 6-phosphogluconate and 3-hydroxyisobutyrate dehydrogenases reveal a new enzyme family, the 3-hydroxyacid dehydrogenases.</title>
        <authorList>
            <person name="Hawes J.W."/>
            <person name="Harper E.T."/>
            <person name="Crabb D.W."/>
            <person name="Harris R.A."/>
        </authorList>
    </citation>
    <scope>MUTAGENESIS</scope>
</reference>
<dbReference type="EC" id="1.1.1.31"/>
<dbReference type="EMBL" id="J04628">
    <property type="protein sequence ID" value="AAA50312.1"/>
    <property type="status" value="ALT_FRAME"/>
    <property type="molecule type" value="mRNA"/>
</dbReference>
<dbReference type="EMBL" id="BC127442">
    <property type="protein sequence ID" value="AAI27443.1"/>
    <property type="molecule type" value="mRNA"/>
</dbReference>
<dbReference type="PIR" id="A32867">
    <property type="entry name" value="A32867"/>
</dbReference>
<dbReference type="RefSeq" id="NP_071579.1">
    <property type="nucleotide sequence ID" value="NM_022243.1"/>
</dbReference>
<dbReference type="SMR" id="P29266"/>
<dbReference type="FunCoup" id="P29266">
    <property type="interactions" value="1988"/>
</dbReference>
<dbReference type="IntAct" id="P29266">
    <property type="interactions" value="1"/>
</dbReference>
<dbReference type="STRING" id="10116.ENSRNOP00000011069"/>
<dbReference type="GlyGen" id="P29266">
    <property type="glycosylation" value="2 sites, 1 O-linked glycan (2 sites)"/>
</dbReference>
<dbReference type="iPTMnet" id="P29266"/>
<dbReference type="PhosphoSitePlus" id="P29266"/>
<dbReference type="SwissPalm" id="P29266"/>
<dbReference type="PaxDb" id="10116-ENSRNOP00000011069"/>
<dbReference type="GeneID" id="63938"/>
<dbReference type="KEGG" id="rno:63938"/>
<dbReference type="UCSC" id="RGD:708399">
    <property type="organism name" value="rat"/>
</dbReference>
<dbReference type="AGR" id="RGD:708399"/>
<dbReference type="CTD" id="11112"/>
<dbReference type="RGD" id="708399">
    <property type="gene designation" value="Hibadh"/>
</dbReference>
<dbReference type="VEuPathDB" id="HostDB:ENSRNOG00000008063"/>
<dbReference type="eggNOG" id="KOG0409">
    <property type="taxonomic scope" value="Eukaryota"/>
</dbReference>
<dbReference type="HOGENOM" id="CLU_035117_6_0_1"/>
<dbReference type="InParanoid" id="P29266"/>
<dbReference type="OrthoDB" id="435038at2759"/>
<dbReference type="PhylomeDB" id="P29266"/>
<dbReference type="TreeFam" id="TF314043"/>
<dbReference type="Reactome" id="R-RNO-70895">
    <property type="pathway name" value="Branched-chain amino acid catabolism"/>
</dbReference>
<dbReference type="SABIO-RK" id="P29266"/>
<dbReference type="UniPathway" id="UPA00362"/>
<dbReference type="PRO" id="PR:P29266"/>
<dbReference type="Proteomes" id="UP000002494">
    <property type="component" value="Chromosome 4"/>
</dbReference>
<dbReference type="Bgee" id="ENSRNOG00000008063">
    <property type="expression patterns" value="Expressed in kidney and 20 other cell types or tissues"/>
</dbReference>
<dbReference type="GO" id="GO:0005739">
    <property type="term" value="C:mitochondrion"/>
    <property type="evidence" value="ECO:0000314"/>
    <property type="project" value="FlyBase"/>
</dbReference>
<dbReference type="GO" id="GO:0008442">
    <property type="term" value="F:3-hydroxyisobutyrate dehydrogenase activity"/>
    <property type="evidence" value="ECO:0000250"/>
    <property type="project" value="UniProtKB"/>
</dbReference>
<dbReference type="GO" id="GO:0051287">
    <property type="term" value="F:NAD binding"/>
    <property type="evidence" value="ECO:0007669"/>
    <property type="project" value="InterPro"/>
</dbReference>
<dbReference type="GO" id="GO:0050661">
    <property type="term" value="F:NADP binding"/>
    <property type="evidence" value="ECO:0007669"/>
    <property type="project" value="InterPro"/>
</dbReference>
<dbReference type="GO" id="GO:0006574">
    <property type="term" value="P:valine catabolic process"/>
    <property type="evidence" value="ECO:0000250"/>
    <property type="project" value="UniProtKB"/>
</dbReference>
<dbReference type="FunFam" id="1.10.1040.10:FF:000006">
    <property type="entry name" value="3-hydroxyisobutyrate dehydrogenase"/>
    <property type="match status" value="1"/>
</dbReference>
<dbReference type="FunFam" id="3.40.50.720:FF:000119">
    <property type="entry name" value="3-hydroxyisobutyrate dehydrogenase"/>
    <property type="match status" value="1"/>
</dbReference>
<dbReference type="Gene3D" id="1.10.1040.10">
    <property type="entry name" value="N-(1-d-carboxylethyl)-l-norvaline Dehydrogenase, domain 2"/>
    <property type="match status" value="1"/>
</dbReference>
<dbReference type="Gene3D" id="3.40.50.720">
    <property type="entry name" value="NAD(P)-binding Rossmann-like Domain"/>
    <property type="match status" value="1"/>
</dbReference>
<dbReference type="InterPro" id="IPR002204">
    <property type="entry name" value="3-OH-isobutyrate_DH-rel_CS"/>
</dbReference>
<dbReference type="InterPro" id="IPR008927">
    <property type="entry name" value="6-PGluconate_DH-like_C_sf"/>
</dbReference>
<dbReference type="InterPro" id="IPR013328">
    <property type="entry name" value="6PGD_dom2"/>
</dbReference>
<dbReference type="InterPro" id="IPR006115">
    <property type="entry name" value="6PGDH_NADP-bd"/>
</dbReference>
<dbReference type="InterPro" id="IPR011548">
    <property type="entry name" value="HIBADH"/>
</dbReference>
<dbReference type="InterPro" id="IPR029154">
    <property type="entry name" value="HIBADH-like_NADP-bd"/>
</dbReference>
<dbReference type="InterPro" id="IPR015815">
    <property type="entry name" value="HIBADH-related"/>
</dbReference>
<dbReference type="InterPro" id="IPR036291">
    <property type="entry name" value="NAD(P)-bd_dom_sf"/>
</dbReference>
<dbReference type="NCBIfam" id="TIGR01692">
    <property type="entry name" value="HIBADH"/>
    <property type="match status" value="1"/>
</dbReference>
<dbReference type="PANTHER" id="PTHR22981:SF7">
    <property type="entry name" value="3-HYDROXYISOBUTYRATE DEHYDROGENASE, MITOCHONDRIAL"/>
    <property type="match status" value="1"/>
</dbReference>
<dbReference type="PANTHER" id="PTHR22981">
    <property type="entry name" value="3-HYDROXYISOBUTYRATE DEHYDROGENASE-RELATED"/>
    <property type="match status" value="1"/>
</dbReference>
<dbReference type="Pfam" id="PF14833">
    <property type="entry name" value="NAD_binding_11"/>
    <property type="match status" value="1"/>
</dbReference>
<dbReference type="Pfam" id="PF03446">
    <property type="entry name" value="NAD_binding_2"/>
    <property type="match status" value="1"/>
</dbReference>
<dbReference type="PIRSF" id="PIRSF000103">
    <property type="entry name" value="HIBADH"/>
    <property type="match status" value="1"/>
</dbReference>
<dbReference type="SUPFAM" id="SSF48179">
    <property type="entry name" value="6-phosphogluconate dehydrogenase C-terminal domain-like"/>
    <property type="match status" value="1"/>
</dbReference>
<dbReference type="SUPFAM" id="SSF51735">
    <property type="entry name" value="NAD(P)-binding Rossmann-fold domains"/>
    <property type="match status" value="1"/>
</dbReference>
<dbReference type="PROSITE" id="PS00895">
    <property type="entry name" value="3_HYDROXYISOBUT_DH"/>
    <property type="match status" value="1"/>
</dbReference>
<protein>
    <recommendedName>
        <fullName>3-hydroxyisobutyrate dehydrogenase, mitochondrial</fullName>
        <shortName>HIBADH</shortName>
        <ecNumber>1.1.1.31</ecNumber>
    </recommendedName>
</protein>
<comment type="catalytic activity">
    <reaction>
        <text>3-hydroxy-2-methylpropanoate + NAD(+) = 2-methyl-3-oxopropanoate + NADH + H(+)</text>
        <dbReference type="Rhea" id="RHEA:17681"/>
        <dbReference type="ChEBI" id="CHEBI:11805"/>
        <dbReference type="ChEBI" id="CHEBI:15378"/>
        <dbReference type="ChEBI" id="CHEBI:57540"/>
        <dbReference type="ChEBI" id="CHEBI:57700"/>
        <dbReference type="ChEBI" id="CHEBI:57945"/>
        <dbReference type="EC" id="1.1.1.31"/>
    </reaction>
</comment>
<comment type="pathway">
    <text>Amino-acid degradation; L-valine degradation.</text>
</comment>
<comment type="subunit">
    <text>Homodimer.</text>
</comment>
<comment type="subcellular location">
    <subcellularLocation>
        <location>Mitochondrion</location>
    </subcellularLocation>
</comment>
<comment type="tissue specificity">
    <text>Higher level in kidney, liver, and heart than in muscle.</text>
</comment>
<comment type="similarity">
    <text evidence="4">Belongs to the HIBADH-related family. 3-hydroxyisobutyrate dehydrogenase subfamily.</text>
</comment>
<comment type="sequence caution" evidence="4">
    <conflict type="frameshift">
        <sequence resource="EMBL-CDS" id="AAA50312"/>
    </conflict>
</comment>
<feature type="transit peptide" description="Mitochondrion" evidence="1">
    <location>
        <begin position="1"/>
        <end position="35"/>
    </location>
</feature>
<feature type="chain" id="PRO_0000007160" description="3-hydroxyisobutyrate dehydrogenase, mitochondrial">
    <location>
        <begin position="36"/>
        <end position="335"/>
    </location>
</feature>
<feature type="active site" evidence="4">
    <location>
        <position position="208"/>
    </location>
</feature>
<feature type="binding site" evidence="1">
    <location>
        <begin position="39"/>
        <end position="68"/>
    </location>
    <ligand>
        <name>NAD(+)</name>
        <dbReference type="ChEBI" id="CHEBI:57540"/>
    </ligand>
</feature>
<feature type="binding site" evidence="1">
    <location>
        <begin position="102"/>
        <end position="103"/>
    </location>
    <ligand>
        <name>NAD(+)</name>
        <dbReference type="ChEBI" id="CHEBI:57540"/>
    </ligand>
</feature>
<feature type="binding site" evidence="1">
    <location>
        <position position="107"/>
    </location>
    <ligand>
        <name>NAD(+)</name>
        <dbReference type="ChEBI" id="CHEBI:57540"/>
    </ligand>
</feature>
<feature type="binding site" evidence="1">
    <location>
        <position position="133"/>
    </location>
    <ligand>
        <name>NAD(+)</name>
        <dbReference type="ChEBI" id="CHEBI:57540"/>
    </ligand>
</feature>
<feature type="binding site" evidence="1">
    <location>
        <position position="283"/>
    </location>
    <ligand>
        <name>NAD(+)</name>
        <dbReference type="ChEBI" id="CHEBI:57540"/>
    </ligand>
</feature>
<feature type="modified residue" description="N6-acetyllysine; alternate" evidence="2">
    <location>
        <position position="59"/>
    </location>
</feature>
<feature type="modified residue" description="N6-succinyllysine; alternate" evidence="2">
    <location>
        <position position="59"/>
    </location>
</feature>
<feature type="modified residue" description="N6-acetyllysine; alternate" evidence="2">
    <location>
        <position position="75"/>
    </location>
</feature>
<feature type="modified residue" description="N6-succinyllysine; alternate" evidence="2">
    <location>
        <position position="75"/>
    </location>
</feature>
<feature type="modified residue" description="N6-succinyllysine" evidence="2">
    <location>
        <position position="94"/>
    </location>
</feature>
<feature type="modified residue" description="N6-acetyllysine" evidence="2">
    <location>
        <position position="120"/>
    </location>
</feature>
<feature type="modified residue" description="N6-succinyllysine" evidence="2">
    <location>
        <position position="140"/>
    </location>
</feature>
<feature type="modified residue" description="N6-acetyllysine" evidence="2">
    <location>
        <position position="144"/>
    </location>
</feature>
<feature type="modified residue" description="N6-acetyllysine; alternate" evidence="2">
    <location>
        <position position="148"/>
    </location>
</feature>
<feature type="modified residue" description="N6-succinyllysine; alternate" evidence="2">
    <location>
        <position position="148"/>
    </location>
</feature>
<feature type="modified residue" description="N6-acetyllysine; alternate" evidence="2">
    <location>
        <position position="237"/>
    </location>
</feature>
<feature type="modified residue" description="N6-succinyllysine; alternate" evidence="2">
    <location>
        <position position="237"/>
    </location>
</feature>
<feature type="modified residue" description="N6-acetyllysine; alternate" evidence="2">
    <location>
        <position position="241"/>
    </location>
</feature>
<feature type="modified residue" description="N6-succinyllysine; alternate" evidence="2">
    <location>
        <position position="241"/>
    </location>
</feature>
<feature type="modified residue" description="N6-succinyllysine" evidence="2">
    <location>
        <position position="296"/>
    </location>
</feature>
<feature type="modified residue" description="N6-acetyllysine; alternate" evidence="2">
    <location>
        <position position="320"/>
    </location>
</feature>
<feature type="modified residue" description="N6-succinyllysine; alternate" evidence="2">
    <location>
        <position position="320"/>
    </location>
</feature>
<feature type="mutagenesis site" description="Decrease of activity with NAD, increase of activity with NADP." evidence="3">
    <original>D</original>
    <variation>R</variation>
    <location>
        <position position="68"/>
    </location>
</feature>
<feature type="mutagenesis site" description="Complete loss of activity." evidence="3">
    <original>K</original>
    <variation>A</variation>
    <variation>H</variation>
    <variation>N</variation>
    <variation>R</variation>
    <location>
        <position position="208"/>
    </location>
</feature>
<feature type="mutagenesis site" description="Decrease in activity." evidence="3">
    <original>N</original>
    <variation>Q</variation>
    <location>
        <position position="212"/>
    </location>
</feature>
<organism>
    <name type="scientific">Rattus norvegicus</name>
    <name type="common">Rat</name>
    <dbReference type="NCBI Taxonomy" id="10116"/>
    <lineage>
        <taxon>Eukaryota</taxon>
        <taxon>Metazoa</taxon>
        <taxon>Chordata</taxon>
        <taxon>Craniata</taxon>
        <taxon>Vertebrata</taxon>
        <taxon>Euteleostomi</taxon>
        <taxon>Mammalia</taxon>
        <taxon>Eutheria</taxon>
        <taxon>Euarchontoglires</taxon>
        <taxon>Glires</taxon>
        <taxon>Rodentia</taxon>
        <taxon>Myomorpha</taxon>
        <taxon>Muroidea</taxon>
        <taxon>Muridae</taxon>
        <taxon>Murinae</taxon>
        <taxon>Rattus</taxon>
    </lineage>
</organism>
<name>3HIDH_RAT</name>
<sequence>MAASLGFRGAASGLRYWSGRRRPVGSLAAVCSRSMASKTPVGFIGLGNMGNPMAKNLIKHGYPLILYDVFPDVCKEFKEAGEQVASSPADVAEKADRIITMLPSSMNSIEVYSGANGILKKVKKGSLLIDSSTIDPSVSKELAKEVEKMGAVFMDAPVSGGVGAARSGNLTFMVGGVENEFAAAQELLGCMGSNVLYCGAVGSGQSAKICNNMLLAISMIGTAEAMNLGIRSGLDPKLLAKILNMSSGRCWSSDTYNPVPGVMDGVPSSNNYQGGFGTTLMAKDLGLAQDSATSTKTPILLGSVAHQIYRMMCSKGYSKKDFSSVFQYLREEETF</sequence>
<gene>
    <name type="primary">Hibadh</name>
</gene>